<accession>B5YQK2</accession>
<gene>
    <name evidence="1" type="primary">rihA</name>
    <name type="ordered locus">ECH74115_0743</name>
</gene>
<evidence type="ECO:0000255" key="1">
    <source>
        <dbReference type="HAMAP-Rule" id="MF_01431"/>
    </source>
</evidence>
<dbReference type="EC" id="3.2.-.-" evidence="1"/>
<dbReference type="EMBL" id="CP001164">
    <property type="protein sequence ID" value="ACI35254.1"/>
    <property type="molecule type" value="Genomic_DNA"/>
</dbReference>
<dbReference type="RefSeq" id="WP_001207527.1">
    <property type="nucleotide sequence ID" value="NC_011353.1"/>
</dbReference>
<dbReference type="SMR" id="B5YQK2"/>
<dbReference type="KEGG" id="ecf:ECH74115_0743"/>
<dbReference type="HOGENOM" id="CLU_036838_2_0_6"/>
<dbReference type="GO" id="GO:0005829">
    <property type="term" value="C:cytosol"/>
    <property type="evidence" value="ECO:0007669"/>
    <property type="project" value="TreeGrafter"/>
</dbReference>
<dbReference type="GO" id="GO:0008477">
    <property type="term" value="F:purine nucleosidase activity"/>
    <property type="evidence" value="ECO:0007669"/>
    <property type="project" value="TreeGrafter"/>
</dbReference>
<dbReference type="GO" id="GO:0045437">
    <property type="term" value="F:uridine nucleosidase activity"/>
    <property type="evidence" value="ECO:0007669"/>
    <property type="project" value="InterPro"/>
</dbReference>
<dbReference type="GO" id="GO:0015949">
    <property type="term" value="P:nucleobase-containing small molecule interconversion"/>
    <property type="evidence" value="ECO:0007669"/>
    <property type="project" value="InterPro"/>
</dbReference>
<dbReference type="GO" id="GO:0006152">
    <property type="term" value="P:purine nucleoside catabolic process"/>
    <property type="evidence" value="ECO:0007669"/>
    <property type="project" value="TreeGrafter"/>
</dbReference>
<dbReference type="GO" id="GO:0006206">
    <property type="term" value="P:pyrimidine nucleobase metabolic process"/>
    <property type="evidence" value="ECO:0007669"/>
    <property type="project" value="UniProtKB-UniRule"/>
</dbReference>
<dbReference type="CDD" id="cd02651">
    <property type="entry name" value="nuc_hydro_IU_UC_XIUA"/>
    <property type="match status" value="1"/>
</dbReference>
<dbReference type="FunFam" id="3.90.245.10:FF:000001">
    <property type="entry name" value="Pyrimidine-specific ribonucleoside hydrolase RihA"/>
    <property type="match status" value="1"/>
</dbReference>
<dbReference type="Gene3D" id="3.90.245.10">
    <property type="entry name" value="Ribonucleoside hydrolase-like"/>
    <property type="match status" value="1"/>
</dbReference>
<dbReference type="HAMAP" id="MF_01431">
    <property type="entry name" value="Pyrim_hydro_RihA"/>
    <property type="match status" value="1"/>
</dbReference>
<dbReference type="InterPro" id="IPR015910">
    <property type="entry name" value="I/U_nuclsd_hydro_CS"/>
</dbReference>
<dbReference type="InterPro" id="IPR001910">
    <property type="entry name" value="Inosine/uridine_hydrolase_dom"/>
</dbReference>
<dbReference type="InterPro" id="IPR023186">
    <property type="entry name" value="IUNH"/>
</dbReference>
<dbReference type="InterPro" id="IPR022975">
    <property type="entry name" value="Pyrim_hydro_RihA"/>
</dbReference>
<dbReference type="InterPro" id="IPR036452">
    <property type="entry name" value="Ribo_hydro-like"/>
</dbReference>
<dbReference type="NCBIfam" id="NF007761">
    <property type="entry name" value="PRK10443.1"/>
    <property type="match status" value="1"/>
</dbReference>
<dbReference type="PANTHER" id="PTHR12304">
    <property type="entry name" value="INOSINE-URIDINE PREFERRING NUCLEOSIDE HYDROLASE"/>
    <property type="match status" value="1"/>
</dbReference>
<dbReference type="PANTHER" id="PTHR12304:SF4">
    <property type="entry name" value="URIDINE NUCLEOSIDASE"/>
    <property type="match status" value="1"/>
</dbReference>
<dbReference type="Pfam" id="PF01156">
    <property type="entry name" value="IU_nuc_hydro"/>
    <property type="match status" value="1"/>
</dbReference>
<dbReference type="SUPFAM" id="SSF53590">
    <property type="entry name" value="Nucleoside hydrolase"/>
    <property type="match status" value="1"/>
</dbReference>
<dbReference type="PROSITE" id="PS01247">
    <property type="entry name" value="IUNH"/>
    <property type="match status" value="1"/>
</dbReference>
<reference key="1">
    <citation type="journal article" date="2011" name="Proc. Natl. Acad. Sci. U.S.A.">
        <title>Genomic anatomy of Escherichia coli O157:H7 outbreaks.</title>
        <authorList>
            <person name="Eppinger M."/>
            <person name="Mammel M.K."/>
            <person name="Leclerc J.E."/>
            <person name="Ravel J."/>
            <person name="Cebula T.A."/>
        </authorList>
    </citation>
    <scope>NUCLEOTIDE SEQUENCE [LARGE SCALE GENOMIC DNA]</scope>
    <source>
        <strain>EC4115 / EHEC</strain>
    </source>
</reference>
<protein>
    <recommendedName>
        <fullName evidence="1">Pyrimidine-specific ribonucleoside hydrolase RihA</fullName>
        <ecNumber evidence="1">3.2.-.-</ecNumber>
    </recommendedName>
    <alternativeName>
        <fullName evidence="1">Cytidine/uridine-specific hydrolase</fullName>
    </alternativeName>
</protein>
<comment type="function">
    <text evidence="1">Hydrolyzes with equal efficiency cytidine or uridine to ribose and cytosine or uracil, respectively.</text>
</comment>
<comment type="similarity">
    <text evidence="1">Belongs to the IUNH family. RihA subfamily.</text>
</comment>
<sequence length="311" mass="33837">MALPILLDCDPGHDDAIAIVLALASPELDVKAITSSAGNQTPEKTLRNVLRMLTLLNRTDIPVAGGAVKPLMRELIIADNVHGESGLDGPALPEPTFAPQNCTAVELMAKTLRESAEPVTIVSTGPQTNVALLLNSHPELHSKIARIVIMGGAMGLGNWTPAAEFNIYVDPEAAEIVFQSGIPVVMAGLDVTHKAQIHVEDTERFRAIGNPVSTIVAELLDFFLEYHKDEKWGFVGAPLHDPCTIAWLLKPELFTTVERWVGVETQGKYTQGMTVVDYYYLTGNKPNATVMVDVDRQGFVDLLADRLKFYA</sequence>
<organism>
    <name type="scientific">Escherichia coli O157:H7 (strain EC4115 / EHEC)</name>
    <dbReference type="NCBI Taxonomy" id="444450"/>
    <lineage>
        <taxon>Bacteria</taxon>
        <taxon>Pseudomonadati</taxon>
        <taxon>Pseudomonadota</taxon>
        <taxon>Gammaproteobacteria</taxon>
        <taxon>Enterobacterales</taxon>
        <taxon>Enterobacteriaceae</taxon>
        <taxon>Escherichia</taxon>
    </lineage>
</organism>
<feature type="chain" id="PRO_1000145790" description="Pyrimidine-specific ribonucleoside hydrolase RihA">
    <location>
        <begin position="1"/>
        <end position="311"/>
    </location>
</feature>
<feature type="active site" evidence="1">
    <location>
        <position position="240"/>
    </location>
</feature>
<proteinExistence type="inferred from homology"/>
<keyword id="KW-0326">Glycosidase</keyword>
<keyword id="KW-0378">Hydrolase</keyword>
<name>RIHA_ECO5E</name>